<name>RL29_AZOVD</name>
<organism>
    <name type="scientific">Azotobacter vinelandii (strain DJ / ATCC BAA-1303)</name>
    <dbReference type="NCBI Taxonomy" id="322710"/>
    <lineage>
        <taxon>Bacteria</taxon>
        <taxon>Pseudomonadati</taxon>
        <taxon>Pseudomonadota</taxon>
        <taxon>Gammaproteobacteria</taxon>
        <taxon>Pseudomonadales</taxon>
        <taxon>Pseudomonadaceae</taxon>
        <taxon>Azotobacter</taxon>
    </lineage>
</organism>
<sequence length="63" mass="7174">MKASELREKTAEQLNEQLLGLLRDQFNLRMQKATGQLGQTHLLSQVKRDIARVKTVLNQQAGK</sequence>
<proteinExistence type="inferred from homology"/>
<reference key="1">
    <citation type="journal article" date="2009" name="J. Bacteriol.">
        <title>Genome sequence of Azotobacter vinelandii, an obligate aerobe specialized to support diverse anaerobic metabolic processes.</title>
        <authorList>
            <person name="Setubal J.C."/>
            <person name="Dos Santos P."/>
            <person name="Goldman B.S."/>
            <person name="Ertesvaag H."/>
            <person name="Espin G."/>
            <person name="Rubio L.M."/>
            <person name="Valla S."/>
            <person name="Almeida N.F."/>
            <person name="Balasubramanian D."/>
            <person name="Cromes L."/>
            <person name="Curatti L."/>
            <person name="Du Z."/>
            <person name="Godsy E."/>
            <person name="Goodner B."/>
            <person name="Hellner-Burris K."/>
            <person name="Hernandez J.A."/>
            <person name="Houmiel K."/>
            <person name="Imperial J."/>
            <person name="Kennedy C."/>
            <person name="Larson T.J."/>
            <person name="Latreille P."/>
            <person name="Ligon L.S."/>
            <person name="Lu J."/>
            <person name="Maerk M."/>
            <person name="Miller N.M."/>
            <person name="Norton S."/>
            <person name="O'Carroll I.P."/>
            <person name="Paulsen I."/>
            <person name="Raulfs E.C."/>
            <person name="Roemer R."/>
            <person name="Rosser J."/>
            <person name="Segura D."/>
            <person name="Slater S."/>
            <person name="Stricklin S.L."/>
            <person name="Studholme D.J."/>
            <person name="Sun J."/>
            <person name="Viana C.J."/>
            <person name="Wallin E."/>
            <person name="Wang B."/>
            <person name="Wheeler C."/>
            <person name="Zhu H."/>
            <person name="Dean D.R."/>
            <person name="Dixon R."/>
            <person name="Wood D."/>
        </authorList>
    </citation>
    <scope>NUCLEOTIDE SEQUENCE [LARGE SCALE GENOMIC DNA]</scope>
    <source>
        <strain>DJ / ATCC BAA-1303</strain>
    </source>
</reference>
<keyword id="KW-0687">Ribonucleoprotein</keyword>
<keyword id="KW-0689">Ribosomal protein</keyword>
<evidence type="ECO:0000255" key="1">
    <source>
        <dbReference type="HAMAP-Rule" id="MF_00374"/>
    </source>
</evidence>
<evidence type="ECO:0000305" key="2"/>
<comment type="similarity">
    <text evidence="1">Belongs to the universal ribosomal protein uL29 family.</text>
</comment>
<dbReference type="EMBL" id="CP001157">
    <property type="protein sequence ID" value="ACO76884.1"/>
    <property type="molecule type" value="Genomic_DNA"/>
</dbReference>
<dbReference type="RefSeq" id="WP_012699310.1">
    <property type="nucleotide sequence ID" value="NC_012560.1"/>
</dbReference>
<dbReference type="SMR" id="C1DKM1"/>
<dbReference type="STRING" id="322710.Avin_06330"/>
<dbReference type="EnsemblBacteria" id="ACO76884">
    <property type="protein sequence ID" value="ACO76884"/>
    <property type="gene ID" value="Avin_06330"/>
</dbReference>
<dbReference type="GeneID" id="88184044"/>
<dbReference type="KEGG" id="avn:Avin_06330"/>
<dbReference type="eggNOG" id="COG0255">
    <property type="taxonomic scope" value="Bacteria"/>
</dbReference>
<dbReference type="HOGENOM" id="CLU_158491_1_2_6"/>
<dbReference type="OrthoDB" id="9815192at2"/>
<dbReference type="Proteomes" id="UP000002424">
    <property type="component" value="Chromosome"/>
</dbReference>
<dbReference type="GO" id="GO:0022625">
    <property type="term" value="C:cytosolic large ribosomal subunit"/>
    <property type="evidence" value="ECO:0007669"/>
    <property type="project" value="TreeGrafter"/>
</dbReference>
<dbReference type="GO" id="GO:0003735">
    <property type="term" value="F:structural constituent of ribosome"/>
    <property type="evidence" value="ECO:0007669"/>
    <property type="project" value="InterPro"/>
</dbReference>
<dbReference type="GO" id="GO:0006412">
    <property type="term" value="P:translation"/>
    <property type="evidence" value="ECO:0007669"/>
    <property type="project" value="UniProtKB-UniRule"/>
</dbReference>
<dbReference type="CDD" id="cd00427">
    <property type="entry name" value="Ribosomal_L29_HIP"/>
    <property type="match status" value="1"/>
</dbReference>
<dbReference type="FunFam" id="1.10.287.310:FF:000001">
    <property type="entry name" value="50S ribosomal protein L29"/>
    <property type="match status" value="1"/>
</dbReference>
<dbReference type="Gene3D" id="1.10.287.310">
    <property type="match status" value="1"/>
</dbReference>
<dbReference type="HAMAP" id="MF_00374">
    <property type="entry name" value="Ribosomal_uL29"/>
    <property type="match status" value="1"/>
</dbReference>
<dbReference type="InterPro" id="IPR050063">
    <property type="entry name" value="Ribosomal_protein_uL29"/>
</dbReference>
<dbReference type="InterPro" id="IPR001854">
    <property type="entry name" value="Ribosomal_uL29"/>
</dbReference>
<dbReference type="InterPro" id="IPR018254">
    <property type="entry name" value="Ribosomal_uL29_CS"/>
</dbReference>
<dbReference type="InterPro" id="IPR036049">
    <property type="entry name" value="Ribosomal_uL29_sf"/>
</dbReference>
<dbReference type="NCBIfam" id="TIGR00012">
    <property type="entry name" value="L29"/>
    <property type="match status" value="1"/>
</dbReference>
<dbReference type="PANTHER" id="PTHR10916">
    <property type="entry name" value="60S RIBOSOMAL PROTEIN L35/50S RIBOSOMAL PROTEIN L29"/>
    <property type="match status" value="1"/>
</dbReference>
<dbReference type="PANTHER" id="PTHR10916:SF0">
    <property type="entry name" value="LARGE RIBOSOMAL SUBUNIT PROTEIN UL29C"/>
    <property type="match status" value="1"/>
</dbReference>
<dbReference type="Pfam" id="PF00831">
    <property type="entry name" value="Ribosomal_L29"/>
    <property type="match status" value="1"/>
</dbReference>
<dbReference type="SUPFAM" id="SSF46561">
    <property type="entry name" value="Ribosomal protein L29 (L29p)"/>
    <property type="match status" value="1"/>
</dbReference>
<dbReference type="PROSITE" id="PS00579">
    <property type="entry name" value="RIBOSOMAL_L29"/>
    <property type="match status" value="1"/>
</dbReference>
<protein>
    <recommendedName>
        <fullName evidence="1">Large ribosomal subunit protein uL29</fullName>
    </recommendedName>
    <alternativeName>
        <fullName evidence="2">50S ribosomal protein L29</fullName>
    </alternativeName>
</protein>
<feature type="chain" id="PRO_1000205615" description="Large ribosomal subunit protein uL29">
    <location>
        <begin position="1"/>
        <end position="63"/>
    </location>
</feature>
<gene>
    <name evidence="1" type="primary">rpmC</name>
    <name type="ordered locus">Avin_06330</name>
</gene>
<accession>C1DKM1</accession>